<proteinExistence type="evidence at protein level"/>
<protein>
    <recommendedName>
        <fullName evidence="5">Glutathione S-transferase P</fullName>
        <ecNumber evidence="2">2.5.1.18</ecNumber>
    </recommendedName>
    <alternativeName>
        <fullName>GST P1-1</fullName>
    </alternativeName>
    <alternativeName>
        <fullName>GST class-pi</fullName>
    </alternativeName>
</protein>
<dbReference type="EC" id="2.5.1.18" evidence="2"/>
<dbReference type="PIR" id="S13780">
    <property type="entry name" value="S13780"/>
</dbReference>
<dbReference type="PDB" id="2GSR">
    <property type="method" value="X-ray"/>
    <property type="resolution" value="2.11 A"/>
    <property type="chains" value="A/B=1-206"/>
</dbReference>
<dbReference type="PDBsum" id="2GSR"/>
<dbReference type="SMR" id="P80031"/>
<dbReference type="FunCoup" id="P80031">
    <property type="interactions" value="643"/>
</dbReference>
<dbReference type="STRING" id="9823.ENSSSCP00000013714"/>
<dbReference type="PaxDb" id="9823-ENSSSCP00000013714"/>
<dbReference type="PeptideAtlas" id="P80031"/>
<dbReference type="eggNOG" id="KOG1695">
    <property type="taxonomic scope" value="Eukaryota"/>
</dbReference>
<dbReference type="InParanoid" id="P80031"/>
<dbReference type="BRENDA" id="2.5.1.18">
    <property type="organism ID" value="6170"/>
</dbReference>
<dbReference type="SABIO-RK" id="P80031"/>
<dbReference type="EvolutionaryTrace" id="P80031"/>
<dbReference type="Proteomes" id="UP000008227">
    <property type="component" value="Unplaced"/>
</dbReference>
<dbReference type="Proteomes" id="UP000314985">
    <property type="component" value="Unplaced"/>
</dbReference>
<dbReference type="Proteomes" id="UP000694570">
    <property type="component" value="Unplaced"/>
</dbReference>
<dbReference type="Proteomes" id="UP000694571">
    <property type="component" value="Unplaced"/>
</dbReference>
<dbReference type="Proteomes" id="UP000694720">
    <property type="component" value="Unplaced"/>
</dbReference>
<dbReference type="Proteomes" id="UP000694722">
    <property type="component" value="Unplaced"/>
</dbReference>
<dbReference type="Proteomes" id="UP000694723">
    <property type="component" value="Unplaced"/>
</dbReference>
<dbReference type="Proteomes" id="UP000694724">
    <property type="component" value="Unplaced"/>
</dbReference>
<dbReference type="Proteomes" id="UP000694725">
    <property type="component" value="Unplaced"/>
</dbReference>
<dbReference type="Proteomes" id="UP000694726">
    <property type="component" value="Unplaced"/>
</dbReference>
<dbReference type="Proteomes" id="UP000694727">
    <property type="component" value="Unplaced"/>
</dbReference>
<dbReference type="Proteomes" id="UP000694728">
    <property type="component" value="Unplaced"/>
</dbReference>
<dbReference type="GO" id="GO:0005829">
    <property type="term" value="C:cytosol"/>
    <property type="evidence" value="ECO:0000318"/>
    <property type="project" value="GO_Central"/>
</dbReference>
<dbReference type="GO" id="GO:0005739">
    <property type="term" value="C:mitochondrion"/>
    <property type="evidence" value="ECO:0007669"/>
    <property type="project" value="UniProtKB-SubCell"/>
</dbReference>
<dbReference type="GO" id="GO:0005634">
    <property type="term" value="C:nucleus"/>
    <property type="evidence" value="ECO:0007669"/>
    <property type="project" value="UniProtKB-SubCell"/>
</dbReference>
<dbReference type="GO" id="GO:0004364">
    <property type="term" value="F:glutathione transferase activity"/>
    <property type="evidence" value="ECO:0000250"/>
    <property type="project" value="UniProtKB"/>
</dbReference>
<dbReference type="GO" id="GO:1901687">
    <property type="term" value="P:glutathione derivative biosynthetic process"/>
    <property type="evidence" value="ECO:0000250"/>
    <property type="project" value="UniProtKB"/>
</dbReference>
<dbReference type="GO" id="GO:0006749">
    <property type="term" value="P:glutathione metabolic process"/>
    <property type="evidence" value="ECO:0000318"/>
    <property type="project" value="GO_Central"/>
</dbReference>
<dbReference type="GO" id="GO:0051122">
    <property type="term" value="P:hepoxilin biosynthetic process"/>
    <property type="evidence" value="ECO:0000250"/>
    <property type="project" value="UniProtKB"/>
</dbReference>
<dbReference type="GO" id="GO:0006693">
    <property type="term" value="P:prostaglandin metabolic process"/>
    <property type="evidence" value="ECO:0000250"/>
    <property type="project" value="UniProtKB"/>
</dbReference>
<dbReference type="CDD" id="cd03210">
    <property type="entry name" value="GST_C_Pi"/>
    <property type="match status" value="1"/>
</dbReference>
<dbReference type="CDD" id="cd03076">
    <property type="entry name" value="GST_N_Pi"/>
    <property type="match status" value="1"/>
</dbReference>
<dbReference type="FunFam" id="1.20.1050.10:FF:000053">
    <property type="entry name" value="Glutathione S-transferase P"/>
    <property type="match status" value="1"/>
</dbReference>
<dbReference type="FunFam" id="3.40.30.10:FF:000071">
    <property type="entry name" value="Glutathione S-transferase P"/>
    <property type="match status" value="1"/>
</dbReference>
<dbReference type="FunFam" id="3.40.30.10:FF:000392">
    <property type="entry name" value="Glutathione S-transferase pi 1"/>
    <property type="match status" value="1"/>
</dbReference>
<dbReference type="Gene3D" id="1.20.1050.10">
    <property type="match status" value="1"/>
</dbReference>
<dbReference type="Gene3D" id="3.40.30.10">
    <property type="entry name" value="Glutaredoxin"/>
    <property type="match status" value="1"/>
</dbReference>
<dbReference type="InterPro" id="IPR010987">
    <property type="entry name" value="Glutathione-S-Trfase_C-like"/>
</dbReference>
<dbReference type="InterPro" id="IPR036282">
    <property type="entry name" value="Glutathione-S-Trfase_C_sf"/>
</dbReference>
<dbReference type="InterPro" id="IPR040079">
    <property type="entry name" value="Glutathione_S-Trfase"/>
</dbReference>
<dbReference type="InterPro" id="IPR004045">
    <property type="entry name" value="Glutathione_S-Trfase_N"/>
</dbReference>
<dbReference type="InterPro" id="IPR004046">
    <property type="entry name" value="GST_C"/>
</dbReference>
<dbReference type="InterPro" id="IPR003082">
    <property type="entry name" value="GST_pi"/>
</dbReference>
<dbReference type="InterPro" id="IPR050213">
    <property type="entry name" value="GST_superfamily"/>
</dbReference>
<dbReference type="InterPro" id="IPR036249">
    <property type="entry name" value="Thioredoxin-like_sf"/>
</dbReference>
<dbReference type="PANTHER" id="PTHR11571">
    <property type="entry name" value="GLUTATHIONE S-TRANSFERASE"/>
    <property type="match status" value="1"/>
</dbReference>
<dbReference type="PANTHER" id="PTHR11571:SF255">
    <property type="entry name" value="GLUTATHIONE S-TRANSFERASE P"/>
    <property type="match status" value="1"/>
</dbReference>
<dbReference type="Pfam" id="PF14497">
    <property type="entry name" value="GST_C_3"/>
    <property type="match status" value="1"/>
</dbReference>
<dbReference type="Pfam" id="PF02798">
    <property type="entry name" value="GST_N"/>
    <property type="match status" value="1"/>
</dbReference>
<dbReference type="PRINTS" id="PR01268">
    <property type="entry name" value="GSTRNSFRASEP"/>
</dbReference>
<dbReference type="SFLD" id="SFLDG01205">
    <property type="entry name" value="AMPS.1"/>
    <property type="match status" value="1"/>
</dbReference>
<dbReference type="SFLD" id="SFLDS00019">
    <property type="entry name" value="Glutathione_Transferase_(cytos"/>
    <property type="match status" value="1"/>
</dbReference>
<dbReference type="SUPFAM" id="SSF47616">
    <property type="entry name" value="GST C-terminal domain-like"/>
    <property type="match status" value="1"/>
</dbReference>
<dbReference type="SUPFAM" id="SSF52833">
    <property type="entry name" value="Thioredoxin-like"/>
    <property type="match status" value="1"/>
</dbReference>
<dbReference type="PROSITE" id="PS50405">
    <property type="entry name" value="GST_CTER"/>
    <property type="match status" value="1"/>
</dbReference>
<dbReference type="PROSITE" id="PS50404">
    <property type="entry name" value="GST_NTER"/>
    <property type="match status" value="1"/>
</dbReference>
<gene>
    <name type="primary">GSTP1</name>
</gene>
<evidence type="ECO:0000250" key="1"/>
<evidence type="ECO:0000250" key="2">
    <source>
        <dbReference type="UniProtKB" id="P09211"/>
    </source>
</evidence>
<evidence type="ECO:0000250" key="3">
    <source>
        <dbReference type="UniProtKB" id="P19157"/>
    </source>
</evidence>
<evidence type="ECO:0000269" key="4">
    <source>
    </source>
</evidence>
<evidence type="ECO:0000305" key="5"/>
<evidence type="ECO:0007829" key="6">
    <source>
        <dbReference type="PDB" id="2GSR"/>
    </source>
</evidence>
<comment type="function">
    <text evidence="2">Conjugation of reduced glutathione to a wide number of exogenous and endogenous hydrophobic electrophiles. Involved in the formation of glutathione conjugates of both prostaglandin A2 (PGA2) and prostaglandin J2 (PGJ2). Participates in the formation of novel hepoxilin regioisomers. Negatively regulates CDK5 activity via p25/p35 translocation to prevent neurodegeneration.</text>
</comment>
<comment type="catalytic activity">
    <reaction evidence="2">
        <text>RX + glutathione = an S-substituted glutathione + a halide anion + H(+)</text>
        <dbReference type="Rhea" id="RHEA:16437"/>
        <dbReference type="ChEBI" id="CHEBI:15378"/>
        <dbReference type="ChEBI" id="CHEBI:16042"/>
        <dbReference type="ChEBI" id="CHEBI:17792"/>
        <dbReference type="ChEBI" id="CHEBI:57925"/>
        <dbReference type="ChEBI" id="CHEBI:90779"/>
        <dbReference type="EC" id="2.5.1.18"/>
    </reaction>
    <physiologicalReaction direction="left-to-right" evidence="2">
        <dbReference type="Rhea" id="RHEA:16438"/>
    </physiologicalReaction>
</comment>
<comment type="catalytic activity">
    <reaction evidence="2">
        <text>prostaglandin J2 + glutathione = prostaglandin J2-S-(R)-glutathione</text>
        <dbReference type="Rhea" id="RHEA:50804"/>
        <dbReference type="ChEBI" id="CHEBI:57925"/>
        <dbReference type="ChEBI" id="CHEBI:133396"/>
        <dbReference type="ChEBI" id="CHEBI:133771"/>
    </reaction>
    <physiologicalReaction direction="left-to-right" evidence="2">
        <dbReference type="Rhea" id="RHEA:50805"/>
    </physiologicalReaction>
</comment>
<comment type="catalytic activity">
    <reaction evidence="2">
        <text>prostaglandin J2 + glutathione = prostaglandin J2-S-(S)-glutathione</text>
        <dbReference type="Rhea" id="RHEA:50808"/>
        <dbReference type="ChEBI" id="CHEBI:57925"/>
        <dbReference type="ChEBI" id="CHEBI:133396"/>
        <dbReference type="ChEBI" id="CHEBI:133772"/>
    </reaction>
    <physiologicalReaction direction="left-to-right" evidence="2">
        <dbReference type="Rhea" id="RHEA:50809"/>
    </physiologicalReaction>
</comment>
<comment type="catalytic activity">
    <reaction evidence="2">
        <text>prostaglandin A2 + glutathione = prostaglandin A2-S-(S)-glutathione</text>
        <dbReference type="Rhea" id="RHEA:50800"/>
        <dbReference type="ChEBI" id="CHEBI:57925"/>
        <dbReference type="ChEBI" id="CHEBI:133370"/>
        <dbReference type="ChEBI" id="CHEBI:133769"/>
    </reaction>
    <physiologicalReaction direction="left-to-right" evidence="2">
        <dbReference type="Rhea" id="RHEA:50801"/>
    </physiologicalReaction>
</comment>
<comment type="catalytic activity">
    <reaction evidence="2">
        <text>11(S)-hydroxy-14(S),15(S)-epoxy-(5Z,8Z,12E)-eicosatrienoate + glutathione = (11S,15S)-dihydroxy-14(R)-S-glutathionyl-(5Z,8Z,12E)-eicosatrienoate</text>
        <dbReference type="Rhea" id="RHEA:50260"/>
        <dbReference type="ChEBI" id="CHEBI:57925"/>
        <dbReference type="ChEBI" id="CHEBI:132200"/>
        <dbReference type="ChEBI" id="CHEBI:132201"/>
    </reaction>
    <physiologicalReaction direction="left-to-right" evidence="2">
        <dbReference type="Rhea" id="RHEA:50261"/>
    </physiologicalReaction>
</comment>
<comment type="subunit">
    <text evidence="1">Homodimer. Interacts with CDK5 (By similarity).</text>
</comment>
<comment type="subcellular location">
    <subcellularLocation>
        <location evidence="1">Cytoplasm</location>
    </subcellularLocation>
    <subcellularLocation>
        <location evidence="1">Mitochondrion</location>
    </subcellularLocation>
    <subcellularLocation>
        <location evidence="1">Nucleus</location>
    </subcellularLocation>
    <text evidence="1">The 83 N-terminal amino acids function as un uncleaved transit peptide, and arginine residues within it are crucial for mitochondrial localization.</text>
</comment>
<comment type="similarity">
    <text evidence="5">Belongs to the GST superfamily. Pi family.</text>
</comment>
<organism>
    <name type="scientific">Sus scrofa</name>
    <name type="common">Pig</name>
    <dbReference type="NCBI Taxonomy" id="9823"/>
    <lineage>
        <taxon>Eukaryota</taxon>
        <taxon>Metazoa</taxon>
        <taxon>Chordata</taxon>
        <taxon>Craniata</taxon>
        <taxon>Vertebrata</taxon>
        <taxon>Euteleostomi</taxon>
        <taxon>Mammalia</taxon>
        <taxon>Eutheria</taxon>
        <taxon>Laurasiatheria</taxon>
        <taxon>Artiodactyla</taxon>
        <taxon>Suina</taxon>
        <taxon>Suidae</taxon>
        <taxon>Sus</taxon>
    </lineage>
</organism>
<accession>P80031</accession>
<name>GSTP1_PIG</name>
<reference key="1">
    <citation type="journal article" date="1991" name="Eur. J. Biochem.">
        <title>Class pi glutathione S-transferase from pig lung. Purification, biochemical characterization, primary structure and crystallization.</title>
        <authorList>
            <person name="Dirr H.W."/>
            <person name="Mann K."/>
            <person name="Huber R."/>
            <person name="Ladenstein R."/>
            <person name="Reinemer P."/>
        </authorList>
    </citation>
    <scope>PROTEIN SEQUENCE</scope>
    <source>
        <tissue>Lung</tissue>
    </source>
</reference>
<reference key="2">
    <citation type="journal article" date="1991" name="Biochem. Biophys. Res. Commun.">
        <title>Pig lens glutathione S-transferase belongs to class Pi enzyme.</title>
        <authorList>
            <person name="Nishinaka T."/>
            <person name="Fujioka M."/>
            <person name="Nanjo H."/>
            <person name="Nishikawa J."/>
            <person name="Mizoguchi T."/>
            <person name="Terada T."/>
            <person name="Nishihara T."/>
        </authorList>
    </citation>
    <scope>PROTEIN SEQUENCE OF 1-15</scope>
    <source>
        <tissue>Lens</tissue>
    </source>
</reference>
<reference key="3">
    <citation type="journal article" date="1991" name="EMBO J.">
        <title>The three-dimensional structure of class pi glutathione S-transferase in complex with glutathione sulfonate at 2.3-A resolution.</title>
        <authorList>
            <person name="Reinemer P."/>
            <person name="Dirr H.W."/>
            <person name="Ladenstein R."/>
            <person name="Schaeffer J."/>
            <person name="Gallay O."/>
            <person name="Huber R."/>
        </authorList>
    </citation>
    <scope>X-RAY CRYSTALLOGRAPHY (2.3 ANGSTROMS) IN COMPLEX WITH GLUTATHIONE SULFONATE</scope>
    <scope>SUBUNIT</scope>
</reference>
<reference key="4">
    <citation type="journal article" date="1994" name="J. Mol. Biol.">
        <title>Refined crystal structure of porcine class Pi glutathione S-transferase (pGST P1-1) at 2.1-A resolution.</title>
        <authorList>
            <person name="Dirr H.W."/>
            <person name="Reinemer P."/>
            <person name="Huber R."/>
        </authorList>
    </citation>
    <scope>X-RAY CRYSTALLOGRAPHY (2.1 ANGSTROMS) IN COMPLEX WITH GLUTATHIONE</scope>
    <scope>SUBUNIT</scope>
</reference>
<keyword id="KW-0002">3D-structure</keyword>
<keyword id="KW-0007">Acetylation</keyword>
<keyword id="KW-0963">Cytoplasm</keyword>
<keyword id="KW-0903">Direct protein sequencing</keyword>
<keyword id="KW-0443">Lipid metabolism</keyword>
<keyword id="KW-0496">Mitochondrion</keyword>
<keyword id="KW-0539">Nucleus</keyword>
<keyword id="KW-0597">Phosphoprotein</keyword>
<keyword id="KW-1185">Reference proteome</keyword>
<keyword id="KW-0808">Transferase</keyword>
<sequence>PPYTITYFPVRGRCEAMRMLLADQDQSWKEEVVTMETWPPLKPSCLFRQLPKFQDGDLTLYQSNAILRHLGRSFGLYGKDQKEAALVDMVNDGVEDLRCKYATLIYTNYEAGKEKYVKELPEHLKPFETLLSQNQGGQAFVVGSQISFADYNLLDLLRIHQVLNPSCLDAFPLLSAYVARLSARPKIKAFLASPEHVNRPINGNGKN</sequence>
<feature type="chain" id="PRO_0000185905" description="Glutathione S-transferase P">
    <location>
        <begin position="1"/>
        <end position="207"/>
    </location>
</feature>
<feature type="domain" description="GST N-terminal">
    <location>
        <begin position="1"/>
        <end position="78"/>
    </location>
</feature>
<feature type="domain" description="GST C-terminal">
    <location>
        <begin position="80"/>
        <end position="201"/>
    </location>
</feature>
<feature type="binding site" evidence="4">
    <location>
        <position position="7"/>
    </location>
    <ligand>
        <name>glutathione</name>
        <dbReference type="ChEBI" id="CHEBI:57925"/>
    </ligand>
</feature>
<feature type="binding site" evidence="4">
    <location>
        <position position="13"/>
    </location>
    <ligand>
        <name>glutathione</name>
        <dbReference type="ChEBI" id="CHEBI:57925"/>
    </ligand>
</feature>
<feature type="binding site" evidence="4">
    <location>
        <position position="38"/>
    </location>
    <ligand>
        <name>glutathione</name>
        <dbReference type="ChEBI" id="CHEBI:57925"/>
    </ligand>
</feature>
<feature type="binding site" evidence="4">
    <location>
        <position position="42"/>
    </location>
    <ligand>
        <name>glutathione</name>
        <dbReference type="ChEBI" id="CHEBI:57925"/>
    </ligand>
</feature>
<feature type="binding site" evidence="4">
    <location>
        <begin position="49"/>
        <end position="50"/>
    </location>
    <ligand>
        <name>glutathione</name>
        <dbReference type="ChEBI" id="CHEBI:57925"/>
    </ligand>
</feature>
<feature type="binding site" evidence="4">
    <location>
        <begin position="62"/>
        <end position="63"/>
    </location>
    <ligand>
        <name>glutathione</name>
        <dbReference type="ChEBI" id="CHEBI:57925"/>
    </ligand>
</feature>
<feature type="modified residue" description="Phosphotyrosine; by EGFR" evidence="2">
    <location>
        <position position="3"/>
    </location>
</feature>
<feature type="modified residue" description="Phosphothreonine" evidence="2">
    <location>
        <position position="59"/>
    </location>
</feature>
<feature type="modified residue" description="N6-succinyllysine" evidence="3">
    <location>
        <position position="100"/>
    </location>
</feature>
<feature type="modified residue" description="N6-succinyllysine" evidence="3">
    <location>
        <position position="113"/>
    </location>
</feature>
<feature type="modified residue" description="N6-acetyllysine" evidence="2">
    <location>
        <position position="125"/>
    </location>
</feature>
<feature type="strand" evidence="6">
    <location>
        <begin position="3"/>
        <end position="7"/>
    </location>
</feature>
<feature type="strand" evidence="6">
    <location>
        <begin position="9"/>
        <end position="11"/>
    </location>
</feature>
<feature type="turn" evidence="6">
    <location>
        <begin position="12"/>
        <end position="14"/>
    </location>
</feature>
<feature type="helix" evidence="6">
    <location>
        <begin position="15"/>
        <end position="23"/>
    </location>
</feature>
<feature type="strand" evidence="6">
    <location>
        <begin position="29"/>
        <end position="32"/>
    </location>
</feature>
<feature type="turn" evidence="6">
    <location>
        <begin position="35"/>
        <end position="37"/>
    </location>
</feature>
<feature type="helix" evidence="6">
    <location>
        <begin position="38"/>
        <end position="41"/>
    </location>
</feature>
<feature type="helix" evidence="6">
    <location>
        <begin position="42"/>
        <end position="44"/>
    </location>
</feature>
<feature type="strand" evidence="6">
    <location>
        <begin position="52"/>
        <end position="55"/>
    </location>
</feature>
<feature type="strand" evidence="6">
    <location>
        <begin position="58"/>
        <end position="62"/>
    </location>
</feature>
<feature type="helix" evidence="6">
    <location>
        <begin position="63"/>
        <end position="74"/>
    </location>
</feature>
<feature type="helix" evidence="6">
    <location>
        <begin position="81"/>
        <end position="107"/>
    </location>
</feature>
<feature type="helix" evidence="6">
    <location>
        <begin position="109"/>
        <end position="132"/>
    </location>
</feature>
<feature type="helix" evidence="6">
    <location>
        <begin position="135"/>
        <end position="137"/>
    </location>
</feature>
<feature type="strand" evidence="6">
    <location>
        <begin position="141"/>
        <end position="145"/>
    </location>
</feature>
<feature type="helix" evidence="6">
    <location>
        <begin position="148"/>
        <end position="163"/>
    </location>
</feature>
<feature type="helix" evidence="6">
    <location>
        <begin position="167"/>
        <end position="170"/>
    </location>
</feature>
<feature type="helix" evidence="6">
    <location>
        <begin position="172"/>
        <end position="182"/>
    </location>
</feature>
<feature type="helix" evidence="6">
    <location>
        <begin position="185"/>
        <end position="192"/>
    </location>
</feature>
<feature type="helix" evidence="6">
    <location>
        <begin position="194"/>
        <end position="197"/>
    </location>
</feature>